<feature type="chain" id="PRO_0000079695" description="44 kDa cell wall protein">
    <location>
        <begin position="1"/>
        <end position="9" status="greater than"/>
    </location>
</feature>
<feature type="non-terminal residue" evidence="2">
    <location>
        <position position="9"/>
    </location>
</feature>
<accession>P82429</accession>
<comment type="subcellular location">
    <subcellularLocation>
        <location evidence="1">Secreted</location>
        <location evidence="1">Cell wall</location>
    </subcellularLocation>
</comment>
<evidence type="ECO:0000269" key="1">
    <source>
    </source>
</evidence>
<evidence type="ECO:0000303" key="2">
    <source>
    </source>
</evidence>
<evidence type="ECO:0000305" key="3"/>
<keyword id="KW-0134">Cell wall</keyword>
<keyword id="KW-0903">Direct protein sequencing</keyword>
<keyword id="KW-1185">Reference proteome</keyword>
<keyword id="KW-0964">Secreted</keyword>
<reference evidence="3" key="1">
    <citation type="journal article" date="2001" name="Planta">
        <title>Proteomic analysis reveals a novel set of cell wall proteins in a transformed tobacco cell culture that synthesises secondary walls as determined by biochemical and morphological parameters.</title>
        <authorList>
            <person name="Blee K.A."/>
            <person name="Wheatley E.R."/>
            <person name="Bonham V.A."/>
            <person name="Mitchell G.P."/>
            <person name="Robertson D."/>
            <person name="Slabas A.R."/>
            <person name="Burrell M.M."/>
            <person name="Wojtaszek P."/>
            <person name="Bolwell G.P."/>
        </authorList>
    </citation>
    <scope>PROTEIN SEQUENCE</scope>
    <scope>SUBCELLULAR LOCATION</scope>
    <source>
        <strain evidence="1">cv. Petit Havana</strain>
    </source>
</reference>
<sequence>AQPPQADFL</sequence>
<dbReference type="Proteomes" id="UP000084051">
    <property type="component" value="Unplaced"/>
</dbReference>
<dbReference type="GO" id="GO:0005576">
    <property type="term" value="C:extracellular region"/>
    <property type="evidence" value="ECO:0007669"/>
    <property type="project" value="UniProtKB-KW"/>
</dbReference>
<name>CWP21_TOBAC</name>
<protein>
    <recommendedName>
        <fullName>44 kDa cell wall protein</fullName>
    </recommendedName>
</protein>
<proteinExistence type="evidence at protein level"/>
<organism>
    <name type="scientific">Nicotiana tabacum</name>
    <name type="common">Common tobacco</name>
    <dbReference type="NCBI Taxonomy" id="4097"/>
    <lineage>
        <taxon>Eukaryota</taxon>
        <taxon>Viridiplantae</taxon>
        <taxon>Streptophyta</taxon>
        <taxon>Embryophyta</taxon>
        <taxon>Tracheophyta</taxon>
        <taxon>Spermatophyta</taxon>
        <taxon>Magnoliopsida</taxon>
        <taxon>eudicotyledons</taxon>
        <taxon>Gunneridae</taxon>
        <taxon>Pentapetalae</taxon>
        <taxon>asterids</taxon>
        <taxon>lamiids</taxon>
        <taxon>Solanales</taxon>
        <taxon>Solanaceae</taxon>
        <taxon>Nicotianoideae</taxon>
        <taxon>Nicotianeae</taxon>
        <taxon>Nicotiana</taxon>
    </lineage>
</organism>